<organism>
    <name type="scientific">Streptomyces sp. (strain R2075)</name>
    <name type="common">Streptoverticillium sp. (strain R2075)</name>
    <dbReference type="NCBI Taxonomy" id="35759"/>
    <lineage>
        <taxon>Bacteria</taxon>
        <taxon>Bacillati</taxon>
        <taxon>Actinomycetota</taxon>
        <taxon>Actinomycetes</taxon>
        <taxon>Kitasatosporales</taxon>
        <taxon>Streptomycetaceae</taxon>
        <taxon>Streptomyces</taxon>
    </lineage>
</organism>
<dbReference type="GO" id="GO:0005576">
    <property type="term" value="C:extracellular region"/>
    <property type="evidence" value="ECO:0007669"/>
    <property type="project" value="UniProtKB-SubCell"/>
</dbReference>
<dbReference type="GO" id="GO:0005102">
    <property type="term" value="F:signaling receptor binding"/>
    <property type="evidence" value="ECO:0007669"/>
    <property type="project" value="UniProtKB-KW"/>
</dbReference>
<dbReference type="GO" id="GO:0042742">
    <property type="term" value="P:defense response to bacterium"/>
    <property type="evidence" value="ECO:0007669"/>
    <property type="project" value="UniProtKB-KW"/>
</dbReference>
<dbReference type="GO" id="GO:0031640">
    <property type="term" value="P:killing of cells of another organism"/>
    <property type="evidence" value="ECO:0007669"/>
    <property type="project" value="UniProtKB-KW"/>
</dbReference>
<dbReference type="InterPro" id="IPR046016">
    <property type="entry name" value="Dur/DurB-like"/>
</dbReference>
<dbReference type="Pfam" id="PF19398">
    <property type="entry name" value="DurB-like"/>
    <property type="match status" value="1"/>
</dbReference>
<protein>
    <recommendedName>
        <fullName>Lantibiotic duramycin B</fullName>
    </recommendedName>
</protein>
<name>DURB_STRGW</name>
<keyword id="KW-0044">Antibiotic</keyword>
<keyword id="KW-0929">Antimicrobial</keyword>
<keyword id="KW-0078">Bacteriocin</keyword>
<keyword id="KW-0903">Direct protein sequencing</keyword>
<keyword id="KW-0379">Hydroxylation</keyword>
<keyword id="KW-0425">Lantibiotic</keyword>
<keyword id="KW-0964">Secreted</keyword>
<keyword id="KW-0883">Thioether bond</keyword>
<sequence>CRQSCSFGPLTFVCDGNTK</sequence>
<accession>P36502</accession>
<feature type="peptide" id="PRO_0000043971" description="Lantibiotic duramycin B">
    <location>
        <begin position="1"/>
        <end position="19"/>
    </location>
</feature>
<feature type="modified residue" description="(3R)-3-hydroxyaspartate" evidence="1 2">
    <location>
        <position position="15"/>
    </location>
</feature>
<feature type="cross-link" description="Beta-methyllanthionine (Cys-Thr)">
    <location>
        <begin position="1"/>
        <end position="18"/>
    </location>
</feature>
<feature type="cross-link" description="Lanthionine (Ser-Cys)">
    <location>
        <begin position="4"/>
        <end position="14"/>
    </location>
</feature>
<feature type="cross-link" description="Beta-methyllanthionine (Cys-Thr)">
    <location>
        <begin position="5"/>
        <end position="11"/>
    </location>
</feature>
<feature type="cross-link" description="Lysinoalanine (Ser-Lys)">
    <location>
        <begin position="6"/>
        <end position="19"/>
    </location>
</feature>
<proteinExistence type="evidence at protein level"/>
<reference key="1">
    <citation type="journal article" date="1990" name="J. Antibiot.">
        <title>Duramycins B and C, two new lanthionine containing antibiotics as inhibitors of phospholipase A2. Structural revision of duramycin and cinnamycin.</title>
        <authorList>
            <person name="Fredenhagen A."/>
            <person name="Fendrich G."/>
            <person name="Marki F."/>
            <person name="Marki W."/>
            <person name="Gruner J."/>
            <person name="Raschdorf F."/>
            <person name="Peter H.H."/>
        </authorList>
    </citation>
    <scope>PROTEIN SEQUENCE</scope>
    <scope>FUNCTION</scope>
    <scope>MASS SPECTROMETRY</scope>
    <scope>CROSS-LINKS</scope>
    <scope>HYDROXYLATION AT ASP-15</scope>
    <scope>SUBCELLULAR LOCATION</scope>
    <source>
        <strain>R2075</strain>
    </source>
</reference>
<reference key="2">
    <citation type="book" date="1993" name="Peptides 1992">
        <title>Solution structure of the lantibiotics duramycin B and C.</title>
        <editorList>
            <person name="Schneider C.H."/>
            <person name="Eberles A.N."/>
        </editorList>
        <authorList>
            <person name="Zimmermann N."/>
            <person name="Freund S."/>
            <person name="Fredenhagen A."/>
            <person name="Jung G."/>
        </authorList>
    </citation>
    <scope>STRUCTURE BY NMR</scope>
    <source>
        <strain>R2075</strain>
    </source>
</reference>
<reference key="3">
    <citation type="journal article" date="1993" name="Eur. J. Biochem.">
        <title>Solution structures of the lantibiotics duramycin B and C.</title>
        <authorList>
            <person name="Zimmermann N."/>
            <person name="Freund S."/>
            <person name="Fredenhagen A."/>
            <person name="Jung G."/>
        </authorList>
    </citation>
    <scope>STRUCTURE BY NMR</scope>
    <scope>MASS SPECTROMETRY</scope>
    <scope>CROSS-LINKS</scope>
    <scope>HYDROXYLATION AT ASP-15</scope>
    <scope>CONFIGURATION OF STEREOCENTERS</scope>
    <scope>SUBCELLULAR LOCATION</scope>
    <source>
        <strain>R2075</strain>
    </source>
</reference>
<comment type="function">
    <text evidence="1">Is a potent inhibitor of human phospholipase A2. Exhibits only a weak antibacterial activity against B.subtilis, and does not display antimicrobial activity against S.aureus, S.mitis, E.coli, K.pneumoniae, P.vulgaris and C.albicans.</text>
</comment>
<comment type="subcellular location">
    <subcellularLocation>
        <location evidence="4 5">Secreted</location>
    </subcellularLocation>
</comment>
<comment type="PTM">
    <text>Maturation of lantibiotics involves the enzymatic conversion of Thr, and Ser into dehydrated AA and the formation of thioether bonds with cysteine or the formation of dialkylamine bonds with lysine. This is followed by membrane translocation and cleavage of the modified precursor.</text>
</comment>
<comment type="mass spectrometry"/>
<comment type="mass spectrometry"/>
<comment type="similarity">
    <text evidence="3">Belongs to the type B lantibiotic family.</text>
</comment>
<evidence type="ECO:0000269" key="1">
    <source>
    </source>
</evidence>
<evidence type="ECO:0000269" key="2">
    <source>
    </source>
</evidence>
<evidence type="ECO:0000305" key="3"/>
<evidence type="ECO:0000305" key="4">
    <source>
    </source>
</evidence>
<evidence type="ECO:0000305" key="5">
    <source>
    </source>
</evidence>